<reference key="1">
    <citation type="journal article" date="2008" name="PLoS ONE">
        <title>A recalibrated molecular clock and independent origins for the cholera pandemic clones.</title>
        <authorList>
            <person name="Feng L."/>
            <person name="Reeves P.R."/>
            <person name="Lan R."/>
            <person name="Ren Y."/>
            <person name="Gao C."/>
            <person name="Zhou Z."/>
            <person name="Ren Y."/>
            <person name="Cheng J."/>
            <person name="Wang W."/>
            <person name="Wang J."/>
            <person name="Qian W."/>
            <person name="Li D."/>
            <person name="Wang L."/>
        </authorList>
    </citation>
    <scope>NUCLEOTIDE SEQUENCE [LARGE SCALE GENOMIC DNA]</scope>
    <source>
        <strain>M66-2</strain>
    </source>
</reference>
<feature type="chain" id="PRO_1000166948" description="Large ribosomal subunit protein uL14">
    <location>
        <begin position="1"/>
        <end position="123"/>
    </location>
</feature>
<organism>
    <name type="scientific">Vibrio cholerae serotype O1 (strain M66-2)</name>
    <dbReference type="NCBI Taxonomy" id="579112"/>
    <lineage>
        <taxon>Bacteria</taxon>
        <taxon>Pseudomonadati</taxon>
        <taxon>Pseudomonadota</taxon>
        <taxon>Gammaproteobacteria</taxon>
        <taxon>Vibrionales</taxon>
        <taxon>Vibrionaceae</taxon>
        <taxon>Vibrio</taxon>
    </lineage>
</organism>
<name>RL14_VIBCM</name>
<dbReference type="EMBL" id="CP001233">
    <property type="protein sequence ID" value="ACP06803.1"/>
    <property type="molecule type" value="Genomic_DNA"/>
</dbReference>
<dbReference type="RefSeq" id="WP_000615540.1">
    <property type="nucleotide sequence ID" value="NC_012578.1"/>
</dbReference>
<dbReference type="SMR" id="C3LRP8"/>
<dbReference type="GeneID" id="94012762"/>
<dbReference type="KEGG" id="vcm:VCM66_2506"/>
<dbReference type="HOGENOM" id="CLU_095071_2_1_6"/>
<dbReference type="Proteomes" id="UP000001217">
    <property type="component" value="Chromosome I"/>
</dbReference>
<dbReference type="GO" id="GO:0022625">
    <property type="term" value="C:cytosolic large ribosomal subunit"/>
    <property type="evidence" value="ECO:0007669"/>
    <property type="project" value="TreeGrafter"/>
</dbReference>
<dbReference type="GO" id="GO:0070180">
    <property type="term" value="F:large ribosomal subunit rRNA binding"/>
    <property type="evidence" value="ECO:0007669"/>
    <property type="project" value="TreeGrafter"/>
</dbReference>
<dbReference type="GO" id="GO:0003735">
    <property type="term" value="F:structural constituent of ribosome"/>
    <property type="evidence" value="ECO:0007669"/>
    <property type="project" value="InterPro"/>
</dbReference>
<dbReference type="GO" id="GO:0006412">
    <property type="term" value="P:translation"/>
    <property type="evidence" value="ECO:0007669"/>
    <property type="project" value="UniProtKB-UniRule"/>
</dbReference>
<dbReference type="CDD" id="cd00337">
    <property type="entry name" value="Ribosomal_uL14"/>
    <property type="match status" value="1"/>
</dbReference>
<dbReference type="FunFam" id="2.40.150.20:FF:000001">
    <property type="entry name" value="50S ribosomal protein L14"/>
    <property type="match status" value="1"/>
</dbReference>
<dbReference type="Gene3D" id="2.40.150.20">
    <property type="entry name" value="Ribosomal protein L14"/>
    <property type="match status" value="1"/>
</dbReference>
<dbReference type="HAMAP" id="MF_01367">
    <property type="entry name" value="Ribosomal_uL14"/>
    <property type="match status" value="1"/>
</dbReference>
<dbReference type="InterPro" id="IPR000218">
    <property type="entry name" value="Ribosomal_uL14"/>
</dbReference>
<dbReference type="InterPro" id="IPR005745">
    <property type="entry name" value="Ribosomal_uL14_bac-type"/>
</dbReference>
<dbReference type="InterPro" id="IPR019972">
    <property type="entry name" value="Ribosomal_uL14_CS"/>
</dbReference>
<dbReference type="InterPro" id="IPR036853">
    <property type="entry name" value="Ribosomal_uL14_sf"/>
</dbReference>
<dbReference type="NCBIfam" id="TIGR01067">
    <property type="entry name" value="rplN_bact"/>
    <property type="match status" value="1"/>
</dbReference>
<dbReference type="PANTHER" id="PTHR11761">
    <property type="entry name" value="50S/60S RIBOSOMAL PROTEIN L14/L23"/>
    <property type="match status" value="1"/>
</dbReference>
<dbReference type="PANTHER" id="PTHR11761:SF3">
    <property type="entry name" value="LARGE RIBOSOMAL SUBUNIT PROTEIN UL14M"/>
    <property type="match status" value="1"/>
</dbReference>
<dbReference type="Pfam" id="PF00238">
    <property type="entry name" value="Ribosomal_L14"/>
    <property type="match status" value="1"/>
</dbReference>
<dbReference type="SMART" id="SM01374">
    <property type="entry name" value="Ribosomal_L14"/>
    <property type="match status" value="1"/>
</dbReference>
<dbReference type="SUPFAM" id="SSF50193">
    <property type="entry name" value="Ribosomal protein L14"/>
    <property type="match status" value="1"/>
</dbReference>
<dbReference type="PROSITE" id="PS00049">
    <property type="entry name" value="RIBOSOMAL_L14"/>
    <property type="match status" value="1"/>
</dbReference>
<accession>C3LRP8</accession>
<sequence length="123" mass="13581">MIQMQTMLDAADNSGARSVMCIKVLGGSHRRYAHVGDIIKVTVKEAIPRGKVKKGDVLKAVVVRTRKGVRRPDGSVIRFDRNACVLLNNNSEQPIGTRIFGPVTRELRNAKFMKIVSLAPEVL</sequence>
<comment type="function">
    <text evidence="1">Binds to 23S rRNA. Forms part of two intersubunit bridges in the 70S ribosome.</text>
</comment>
<comment type="subunit">
    <text evidence="1">Part of the 50S ribosomal subunit. Forms a cluster with proteins L3 and L19. In the 70S ribosome, L14 and L19 interact and together make contacts with the 16S rRNA in bridges B5 and B8.</text>
</comment>
<comment type="similarity">
    <text evidence="1">Belongs to the universal ribosomal protein uL14 family.</text>
</comment>
<proteinExistence type="inferred from homology"/>
<keyword id="KW-0687">Ribonucleoprotein</keyword>
<keyword id="KW-0689">Ribosomal protein</keyword>
<keyword id="KW-0694">RNA-binding</keyword>
<keyword id="KW-0699">rRNA-binding</keyword>
<evidence type="ECO:0000255" key="1">
    <source>
        <dbReference type="HAMAP-Rule" id="MF_01367"/>
    </source>
</evidence>
<evidence type="ECO:0000305" key="2"/>
<gene>
    <name evidence="1" type="primary">rplN</name>
    <name type="ordered locus">VCM66_2506</name>
</gene>
<protein>
    <recommendedName>
        <fullName evidence="1">Large ribosomal subunit protein uL14</fullName>
    </recommendedName>
    <alternativeName>
        <fullName evidence="2">50S ribosomal protein L14</fullName>
    </alternativeName>
</protein>